<protein>
    <recommendedName>
        <fullName>Oligo-1,6-glucosidase</fullName>
        <ecNumber>3.2.1.10</ecNumber>
    </recommendedName>
    <alternativeName>
        <fullName>Dextrin 6-alpha-D-glucanohydrolase</fullName>
    </alternativeName>
    <alternativeName>
        <fullName>Oligosaccharide alpha-1,6-glucosidase</fullName>
    </alternativeName>
    <alternativeName>
        <fullName>Sucrase-isomaltase</fullName>
        <shortName>Isomaltase</shortName>
    </alternativeName>
</protein>
<keyword id="KW-0963">Cytoplasm</keyword>
<keyword id="KW-0326">Glycosidase</keyword>
<keyword id="KW-0378">Hydrolase</keyword>
<dbReference type="EC" id="3.2.1.10"/>
<dbReference type="EMBL" id="D78342">
    <property type="protein sequence ID" value="BAA11354.1"/>
    <property type="molecule type" value="Genomic_DNA"/>
</dbReference>
<dbReference type="SMR" id="Q45101"/>
<dbReference type="STRING" id="1398.AB434_0896"/>
<dbReference type="CAZy" id="GH13">
    <property type="family name" value="Glycoside Hydrolase Family 13"/>
</dbReference>
<dbReference type="GO" id="GO:0005737">
    <property type="term" value="C:cytoplasm"/>
    <property type="evidence" value="ECO:0007669"/>
    <property type="project" value="UniProtKB-SubCell"/>
</dbReference>
<dbReference type="GO" id="GO:0004556">
    <property type="term" value="F:alpha-amylase activity"/>
    <property type="evidence" value="ECO:0007669"/>
    <property type="project" value="TreeGrafter"/>
</dbReference>
<dbReference type="GO" id="GO:0004574">
    <property type="term" value="F:oligo-1,6-glucosidase activity"/>
    <property type="evidence" value="ECO:0007669"/>
    <property type="project" value="UniProtKB-EC"/>
</dbReference>
<dbReference type="GO" id="GO:0009313">
    <property type="term" value="P:oligosaccharide catabolic process"/>
    <property type="evidence" value="ECO:0007669"/>
    <property type="project" value="TreeGrafter"/>
</dbReference>
<dbReference type="CDD" id="cd11333">
    <property type="entry name" value="AmyAc_SI_OligoGlu_DGase"/>
    <property type="match status" value="1"/>
</dbReference>
<dbReference type="FunFam" id="3.20.20.80:FF:000014">
    <property type="entry name" value="Alpha,alpha-phosphotrehalase"/>
    <property type="match status" value="1"/>
</dbReference>
<dbReference type="FunFam" id="3.20.20.80:FF:000064">
    <property type="entry name" value="Oligo-1,6-glucosidase"/>
    <property type="match status" value="1"/>
</dbReference>
<dbReference type="FunFam" id="2.60.40.1180:FF:000007">
    <property type="entry name" value="Sucrose isomerase"/>
    <property type="match status" value="1"/>
</dbReference>
<dbReference type="FunFam" id="3.90.400.10:FF:000002">
    <property type="entry name" value="Sucrose isomerase"/>
    <property type="match status" value="1"/>
</dbReference>
<dbReference type="Gene3D" id="3.20.20.80">
    <property type="entry name" value="Glycosidases"/>
    <property type="match status" value="1"/>
</dbReference>
<dbReference type="Gene3D" id="2.60.40.1180">
    <property type="entry name" value="Golgi alpha-mannosidase II"/>
    <property type="match status" value="1"/>
</dbReference>
<dbReference type="Gene3D" id="3.90.400.10">
    <property type="entry name" value="Oligo-1,6-glucosidase, Domain 2"/>
    <property type="match status" value="1"/>
</dbReference>
<dbReference type="InterPro" id="IPR006047">
    <property type="entry name" value="Glyco_hydro_13_cat_dom"/>
</dbReference>
<dbReference type="InterPro" id="IPR013780">
    <property type="entry name" value="Glyco_hydro_b"/>
</dbReference>
<dbReference type="InterPro" id="IPR017853">
    <property type="entry name" value="Glycoside_hydrolase_SF"/>
</dbReference>
<dbReference type="InterPro" id="IPR032091">
    <property type="entry name" value="Malt_amylase-like_C"/>
</dbReference>
<dbReference type="InterPro" id="IPR045857">
    <property type="entry name" value="O16G_dom_2"/>
</dbReference>
<dbReference type="NCBIfam" id="NF008183">
    <property type="entry name" value="PRK10933.1"/>
    <property type="match status" value="1"/>
</dbReference>
<dbReference type="PANTHER" id="PTHR10357">
    <property type="entry name" value="ALPHA-AMYLASE FAMILY MEMBER"/>
    <property type="match status" value="1"/>
</dbReference>
<dbReference type="PANTHER" id="PTHR10357:SF184">
    <property type="entry name" value="OLIGO-1,6-GLUCOSIDASE 1"/>
    <property type="match status" value="1"/>
</dbReference>
<dbReference type="Pfam" id="PF00128">
    <property type="entry name" value="Alpha-amylase"/>
    <property type="match status" value="1"/>
</dbReference>
<dbReference type="Pfam" id="PF16657">
    <property type="entry name" value="Malt_amylase_C"/>
    <property type="match status" value="1"/>
</dbReference>
<dbReference type="SMART" id="SM00642">
    <property type="entry name" value="Aamy"/>
    <property type="match status" value="1"/>
</dbReference>
<dbReference type="SUPFAM" id="SSF51445">
    <property type="entry name" value="(Trans)glycosidases"/>
    <property type="match status" value="1"/>
</dbReference>
<dbReference type="SUPFAM" id="SSF51011">
    <property type="entry name" value="Glycosyl hydrolase domain"/>
    <property type="match status" value="1"/>
</dbReference>
<feature type="chain" id="PRO_0000054314" description="Oligo-1,6-glucosidase">
    <location>
        <begin position="1"/>
        <end position="555"/>
    </location>
</feature>
<feature type="active site" description="Nucleophile" evidence="1">
    <location>
        <position position="199"/>
    </location>
</feature>
<feature type="active site" description="Proton donor" evidence="1">
    <location>
        <position position="255"/>
    </location>
</feature>
<feature type="site" description="Transition state stabilizer" evidence="1">
    <location>
        <position position="332"/>
    </location>
</feature>
<sequence>MTEWWKKAVVYQIYPRSFYDTNGDGIGDLRGIMDKLDYLKTLGIDCIWISPVYDSPQDDNGYDIRDYRKIDKMFGTNEDMDRLLDEAHARGIKIVMDLVVNHTSDEHAWFVESRKSKDNPYRDFYFWKDPKPDGTPPNNWGSMFSGSAWEYDETTGQYYLHYFSKKQPDLNWENEKVRKEIYDMMKFWMDKGVDGWRMDVIGSISKFLDFPDYELPEGQKYGIGKYHANGPRLHAFIQEMNREVLSKYDCMTVGEAIGSDVEIARKYTGPDRHELNMIFNFEHMDVDTKPGSPAGKWALKPFDLVELKQILSRWQYELADTGWNALYFENHDQARVVSRWGNDTTYRAECAKAFATILHGLKGTPFIYQGEEIGMVNADLELEEYDDIEIRNAYQELVMENQIMSKDEFLTAVRKKGRDNARTPMQWDGSFNAGFTTGTPWLKVNSRYSEINVAKALQEPDSIFYYYQSLIKLRHSYDVFTDGRYELLMPDHPHLYVYTRENESEKLLVAANLSENTVSFDQPDDNWKLLLGNYEDTGTSTLFRPYEAAIYYLEK</sequence>
<name>O16G_HEYCO</name>
<reference key="1">
    <citation type="journal article" date="1996" name="Appl. Environ. Microbiol.">
        <title>Analysis of the critical sites for protein thermostabilization by proline substitution in oligo-1,6-glucosidase from Bacillus coagulans ATCC 7050 and the evolutionary consideration of proline residues.</title>
        <authorList>
            <person name="Watanabe K."/>
            <person name="Kitamura K."/>
            <person name="Suzuki Y."/>
        </authorList>
    </citation>
    <scope>NUCLEOTIDE SEQUENCE [GENOMIC DNA]</scope>
    <source>
        <strain>ATCC 7050 / DSM 1 / JCM 2257 / CCUG 7417 / NBRC 12583 / NCIMB 9365 / NCTC 10334 / NRS 609</strain>
    </source>
</reference>
<accession>Q45101</accession>
<gene>
    <name type="primary">malL</name>
</gene>
<organism>
    <name type="scientific">Heyndrickxia coagulans</name>
    <name type="common">Weizmannia coagulans</name>
    <dbReference type="NCBI Taxonomy" id="1398"/>
    <lineage>
        <taxon>Bacteria</taxon>
        <taxon>Bacillati</taxon>
        <taxon>Bacillota</taxon>
        <taxon>Bacilli</taxon>
        <taxon>Bacillales</taxon>
        <taxon>Bacillaceae</taxon>
        <taxon>Heyndrickxia</taxon>
    </lineage>
</organism>
<proteinExistence type="inferred from homology"/>
<evidence type="ECO:0000250" key="1"/>
<evidence type="ECO:0000305" key="2"/>
<comment type="catalytic activity">
    <reaction>
        <text>Hydrolysis of (1-&gt;6)-alpha-D-glucosidic linkages in some oligosaccharides produced from starch and glycogen by alpha-amylase, and in isomaltose.</text>
        <dbReference type="EC" id="3.2.1.10"/>
    </reaction>
</comment>
<comment type="subcellular location">
    <subcellularLocation>
        <location>Cytoplasm</location>
    </subcellularLocation>
</comment>
<comment type="similarity">
    <text evidence="2">Belongs to the glycosyl hydrolase 13 family.</text>
</comment>